<proteinExistence type="evidence at transcript level"/>
<name>DIM1_MACFA</name>
<dbReference type="EC" id="2.1.1.183" evidence="1"/>
<dbReference type="EMBL" id="AB060843">
    <property type="protein sequence ID" value="BAB46866.1"/>
    <property type="molecule type" value="mRNA"/>
</dbReference>
<dbReference type="RefSeq" id="NP_001270420.1">
    <property type="nucleotide sequence ID" value="NM_001283491.1"/>
</dbReference>
<dbReference type="SMR" id="Q95KJ0"/>
<dbReference type="STRING" id="9541.ENSMFAP00000021122"/>
<dbReference type="eggNOG" id="KOG0820">
    <property type="taxonomic scope" value="Eukaryota"/>
</dbReference>
<dbReference type="Proteomes" id="UP000233100">
    <property type="component" value="Unplaced"/>
</dbReference>
<dbReference type="GO" id="GO:0005730">
    <property type="term" value="C:nucleolus"/>
    <property type="evidence" value="ECO:0000250"/>
    <property type="project" value="UniProtKB"/>
</dbReference>
<dbReference type="GO" id="GO:0005654">
    <property type="term" value="C:nucleoplasm"/>
    <property type="evidence" value="ECO:0007669"/>
    <property type="project" value="UniProtKB-SubCell"/>
</dbReference>
<dbReference type="GO" id="GO:0032040">
    <property type="term" value="C:small-subunit processome"/>
    <property type="evidence" value="ECO:0000250"/>
    <property type="project" value="UniProtKB"/>
</dbReference>
<dbReference type="GO" id="GO:0052909">
    <property type="term" value="F:18S rRNA (adenine(1779)-N(6)/adenine(1780)-N(6))-dimethyltransferase activity"/>
    <property type="evidence" value="ECO:0000250"/>
    <property type="project" value="UniProtKB"/>
</dbReference>
<dbReference type="GO" id="GO:0003723">
    <property type="term" value="F:RNA binding"/>
    <property type="evidence" value="ECO:0007669"/>
    <property type="project" value="UniProtKB-KW"/>
</dbReference>
<dbReference type="GO" id="GO:2000234">
    <property type="term" value="P:positive regulation of rRNA processing"/>
    <property type="evidence" value="ECO:0000250"/>
    <property type="project" value="UniProtKB"/>
</dbReference>
<dbReference type="GO" id="GO:0042274">
    <property type="term" value="P:ribosomal small subunit biogenesis"/>
    <property type="evidence" value="ECO:0000250"/>
    <property type="project" value="UniProtKB"/>
</dbReference>
<dbReference type="GO" id="GO:0031167">
    <property type="term" value="P:rRNA methylation"/>
    <property type="evidence" value="ECO:0000250"/>
    <property type="project" value="UniProtKB"/>
</dbReference>
<dbReference type="CDD" id="cd02440">
    <property type="entry name" value="AdoMet_MTases"/>
    <property type="match status" value="1"/>
</dbReference>
<dbReference type="FunFam" id="1.10.8.480:FF:000001">
    <property type="entry name" value="rRNA adenine N(6)-methyltransferase"/>
    <property type="match status" value="1"/>
</dbReference>
<dbReference type="FunFam" id="3.40.50.150:FF:000007">
    <property type="entry name" value="rRNA adenine N(6)-methyltransferase"/>
    <property type="match status" value="1"/>
</dbReference>
<dbReference type="Gene3D" id="1.10.8.480">
    <property type="match status" value="1"/>
</dbReference>
<dbReference type="Gene3D" id="3.40.50.150">
    <property type="entry name" value="Vaccinia Virus protein VP39"/>
    <property type="match status" value="1"/>
</dbReference>
<dbReference type="InterPro" id="IPR001737">
    <property type="entry name" value="KsgA/Erm"/>
</dbReference>
<dbReference type="InterPro" id="IPR020596">
    <property type="entry name" value="rRNA_Ade_Mease_Trfase_CS"/>
</dbReference>
<dbReference type="InterPro" id="IPR020598">
    <property type="entry name" value="rRNA_Ade_methylase_Trfase_N"/>
</dbReference>
<dbReference type="InterPro" id="IPR011530">
    <property type="entry name" value="rRNA_adenine_dimethylase"/>
</dbReference>
<dbReference type="InterPro" id="IPR029063">
    <property type="entry name" value="SAM-dependent_MTases_sf"/>
</dbReference>
<dbReference type="NCBIfam" id="TIGR00755">
    <property type="entry name" value="ksgA"/>
    <property type="match status" value="1"/>
</dbReference>
<dbReference type="PANTHER" id="PTHR11727">
    <property type="entry name" value="DIMETHYLADENOSINE TRANSFERASE"/>
    <property type="match status" value="1"/>
</dbReference>
<dbReference type="PANTHER" id="PTHR11727:SF7">
    <property type="entry name" value="DIMETHYLADENOSINE TRANSFERASE-RELATED"/>
    <property type="match status" value="1"/>
</dbReference>
<dbReference type="Pfam" id="PF00398">
    <property type="entry name" value="RrnaAD"/>
    <property type="match status" value="1"/>
</dbReference>
<dbReference type="SMART" id="SM00650">
    <property type="entry name" value="rADc"/>
    <property type="match status" value="1"/>
</dbReference>
<dbReference type="SUPFAM" id="SSF53335">
    <property type="entry name" value="S-adenosyl-L-methionine-dependent methyltransferases"/>
    <property type="match status" value="1"/>
</dbReference>
<dbReference type="PROSITE" id="PS01131">
    <property type="entry name" value="RRNA_A_DIMETH"/>
    <property type="match status" value="1"/>
</dbReference>
<dbReference type="PROSITE" id="PS51689">
    <property type="entry name" value="SAM_RNA_A_N6_MT"/>
    <property type="match status" value="1"/>
</dbReference>
<organism>
    <name type="scientific">Macaca fascicularis</name>
    <name type="common">Crab-eating macaque</name>
    <name type="synonym">Cynomolgus monkey</name>
    <dbReference type="NCBI Taxonomy" id="9541"/>
    <lineage>
        <taxon>Eukaryota</taxon>
        <taxon>Metazoa</taxon>
        <taxon>Chordata</taxon>
        <taxon>Craniata</taxon>
        <taxon>Vertebrata</taxon>
        <taxon>Euteleostomi</taxon>
        <taxon>Mammalia</taxon>
        <taxon>Eutheria</taxon>
        <taxon>Euarchontoglires</taxon>
        <taxon>Primates</taxon>
        <taxon>Haplorrhini</taxon>
        <taxon>Catarrhini</taxon>
        <taxon>Cercopithecidae</taxon>
        <taxon>Cercopithecinae</taxon>
        <taxon>Macaca</taxon>
    </lineage>
</organism>
<evidence type="ECO:0000250" key="1">
    <source>
        <dbReference type="UniProtKB" id="Q9UNQ2"/>
    </source>
</evidence>
<evidence type="ECO:0000255" key="2">
    <source>
        <dbReference type="PROSITE-ProRule" id="PRU01026"/>
    </source>
</evidence>
<evidence type="ECO:0000256" key="3">
    <source>
        <dbReference type="SAM" id="MobiDB-lite"/>
    </source>
</evidence>
<protein>
    <recommendedName>
        <fullName>Dimethyladenosine transferase</fullName>
        <ecNumber evidence="1">2.1.1.183</ecNumber>
    </recommendedName>
    <alternativeName>
        <fullName>18S rRNA (adenine(1779)-N(6)/adenine(1780)-N(6))-dimethyltransferase</fullName>
    </alternativeName>
    <alternativeName>
        <fullName>18S rRNA dimethylase</fullName>
    </alternativeName>
    <alternativeName>
        <fullName>DIM1 dimethyladenosine transferase 1 homolog</fullName>
    </alternativeName>
    <alternativeName>
        <fullName>DIM1 dimethyladenosine transferase 1-like</fullName>
    </alternativeName>
    <alternativeName>
        <fullName>S-adenosylmethionine-6-N',N'-adenosyl(rRNA) dimethyltransferase</fullName>
    </alternativeName>
</protein>
<comment type="function">
    <text evidence="1">Specifically dimethylates two adjacent adenosines in the loop of a conserved hairpin near the 3'-end of 18S rRNA in the 40S particle. Involved in the pre-rRNA processing steps leading to small-subunit rRNA production independently of its RNA-modifying catalytic activity. Part of the small subunit (SSU) processome, first precursor of the small eukaryotic ribosomal subunit. During the assembly of the SSU processome in the nucleolus, many ribosome biogenesis factors, an RNA chaperone and ribosomal proteins associate with the nascent pre-rRNA and work in concert to generate RNA folding, modifications, rearrangements and cleavage as well as targeted degradation of pre-ribosomal RNA by the RNA exosome.</text>
</comment>
<comment type="catalytic activity">
    <reaction evidence="1">
        <text>adenosine(1779)/adenosine(1780) in 18S rRNA + 4 S-adenosyl-L-methionine = N(6)-dimethyladenosine(1779)/N(6)-dimethyladenosine(1780) in 18S rRNA + 4 S-adenosyl-L-homocysteine + 4 H(+)</text>
        <dbReference type="Rhea" id="RHEA:42780"/>
        <dbReference type="Rhea" id="RHEA-COMP:10234"/>
        <dbReference type="Rhea" id="RHEA-COMP:10236"/>
        <dbReference type="ChEBI" id="CHEBI:15378"/>
        <dbReference type="ChEBI" id="CHEBI:57856"/>
        <dbReference type="ChEBI" id="CHEBI:59789"/>
        <dbReference type="ChEBI" id="CHEBI:74411"/>
        <dbReference type="ChEBI" id="CHEBI:74493"/>
        <dbReference type="EC" id="2.1.1.183"/>
    </reaction>
</comment>
<comment type="subunit">
    <text evidence="1">Part of the small subunit (SSU) processome, composed of more than 70 proteins and the RNA chaperone small nucleolar RNA (snoRNA) U3.</text>
</comment>
<comment type="subcellular location">
    <subcellularLocation>
        <location evidence="1">Nucleus</location>
        <location evidence="1">Nucleoplasm</location>
    </subcellularLocation>
    <subcellularLocation>
        <location evidence="1">Nucleus</location>
        <location evidence="1">Nucleolus</location>
    </subcellularLocation>
</comment>
<comment type="similarity">
    <text evidence="2">Belongs to the class I-like SAM-binding methyltransferase superfamily. rRNA adenine N(6)-methyltransferase family.</text>
</comment>
<accession>Q95KJ0</accession>
<sequence>MPKVKSGAIGRRRGRQEQRRELKSAGGLMFNTGIGQHILKNPLIINSIIDKAALRPTDVVLEVGPGTGNMTVKLLEKAKKVVACELDPRLVAELRKRVQGTPVASKLQVLVGDVLKTDLPFFDTCVANLPYQISSPFVFKLLLHRPFFRCAILMFQRELALRLVAKPGDKLYCRLSINTQLLARVDHLMKVGKNNFRPPPKVESSVVRIEPKNPPPPINFQEWDGLVRITFVRKNKTLSAAFKSSAVQQLLEKNYRIHCSVHNIIIPEDFSIADKIQQILTSTGFSDKRARSMDIDDFIRLLHGFNAEGIHFS</sequence>
<feature type="chain" id="PRO_0000101466" description="Dimethyladenosine transferase">
    <location>
        <begin position="1"/>
        <end position="313"/>
    </location>
</feature>
<feature type="region of interest" description="Disordered" evidence="3">
    <location>
        <begin position="1"/>
        <end position="21"/>
    </location>
</feature>
<feature type="binding site" evidence="2">
    <location>
        <position position="37"/>
    </location>
    <ligand>
        <name>S-adenosyl-L-methionine</name>
        <dbReference type="ChEBI" id="CHEBI:59789"/>
    </ligand>
</feature>
<feature type="binding site" evidence="2">
    <location>
        <position position="39"/>
    </location>
    <ligand>
        <name>S-adenosyl-L-methionine</name>
        <dbReference type="ChEBI" id="CHEBI:59789"/>
    </ligand>
</feature>
<feature type="binding site" evidence="2">
    <location>
        <position position="64"/>
    </location>
    <ligand>
        <name>S-adenosyl-L-methionine</name>
        <dbReference type="ChEBI" id="CHEBI:59789"/>
    </ligand>
</feature>
<feature type="binding site" evidence="2">
    <location>
        <position position="85"/>
    </location>
    <ligand>
        <name>S-adenosyl-L-methionine</name>
        <dbReference type="ChEBI" id="CHEBI:59789"/>
    </ligand>
</feature>
<feature type="binding site" evidence="2">
    <location>
        <position position="113"/>
    </location>
    <ligand>
        <name>S-adenosyl-L-methionine</name>
        <dbReference type="ChEBI" id="CHEBI:59789"/>
    </ligand>
</feature>
<feature type="binding site" evidence="2">
    <location>
        <position position="128"/>
    </location>
    <ligand>
        <name>S-adenosyl-L-methionine</name>
        <dbReference type="ChEBI" id="CHEBI:59789"/>
    </ligand>
</feature>
<reference key="1">
    <citation type="submission" date="2001-04" db="EMBL/GenBank/DDBJ databases">
        <title>Isolation of full-length cDNA clones from macaque brain cDNA libraries.</title>
        <authorList>
            <person name="Osada N."/>
            <person name="Hida M."/>
            <person name="Kusuda J."/>
            <person name="Tanuma R."/>
            <person name="Iseki K."/>
            <person name="Hirai M."/>
            <person name="Terao K."/>
            <person name="Suzuki Y."/>
            <person name="Sugano S."/>
            <person name="Hashimoto K."/>
        </authorList>
    </citation>
    <scope>NUCLEOTIDE SEQUENCE [LARGE SCALE MRNA]</scope>
    <source>
        <tissue>Temporal cortex</tissue>
    </source>
</reference>
<keyword id="KW-0489">Methyltransferase</keyword>
<keyword id="KW-0539">Nucleus</keyword>
<keyword id="KW-1185">Reference proteome</keyword>
<keyword id="KW-0694">RNA-binding</keyword>
<keyword id="KW-0698">rRNA processing</keyword>
<keyword id="KW-0949">S-adenosyl-L-methionine</keyword>
<keyword id="KW-0808">Transferase</keyword>
<gene>
    <name type="primary">DIMT1</name>
    <name type="synonym">DIMT1L</name>
    <name type="ORF">QtrA-10945</name>
</gene>